<accession>A8A968</accession>
<sequence length="101" mass="11698">MPKEKDGVIYTINLRRLYWGRRSNRAKRAVRMVREFVARHFGVEPEDVKIDNTVNNYLWSGSITKPPARVQVYVTVKTESGEEGERKVAYVTLANVKDVED</sequence>
<comment type="similarity">
    <text evidence="1">Belongs to the eukaryotic ribosomal protein eL31 family.</text>
</comment>
<reference key="1">
    <citation type="journal article" date="2008" name="Genome Biol.">
        <title>A genomic analysis of the archaeal system Ignicoccus hospitalis-Nanoarchaeum equitans.</title>
        <authorList>
            <person name="Podar M."/>
            <person name="Anderson I."/>
            <person name="Makarova K.S."/>
            <person name="Elkins J.G."/>
            <person name="Ivanova N."/>
            <person name="Wall M.A."/>
            <person name="Lykidis A."/>
            <person name="Mavromatis K."/>
            <person name="Sun H."/>
            <person name="Hudson M.E."/>
            <person name="Chen W."/>
            <person name="Deciu C."/>
            <person name="Hutchison D."/>
            <person name="Eads J.R."/>
            <person name="Anderson A."/>
            <person name="Fernandes F."/>
            <person name="Szeto E."/>
            <person name="Lapidus A."/>
            <person name="Kyrpides N.C."/>
            <person name="Saier M.H. Jr."/>
            <person name="Richardson P.M."/>
            <person name="Rachel R."/>
            <person name="Huber H."/>
            <person name="Eisen J.A."/>
            <person name="Koonin E.V."/>
            <person name="Keller M."/>
            <person name="Stetter K.O."/>
        </authorList>
    </citation>
    <scope>NUCLEOTIDE SEQUENCE [LARGE SCALE GENOMIC DNA]</scope>
    <source>
        <strain>KIN4/I / DSM 18386 / JCM 14125</strain>
    </source>
</reference>
<gene>
    <name evidence="1" type="primary">rpl31e</name>
    <name type="ordered locus">Igni_0287</name>
</gene>
<dbReference type="EMBL" id="CP000816">
    <property type="protein sequence ID" value="ABU81470.1"/>
    <property type="molecule type" value="Genomic_DNA"/>
</dbReference>
<dbReference type="SMR" id="A8A968"/>
<dbReference type="STRING" id="453591.Igni_0287"/>
<dbReference type="KEGG" id="iho:Igni_0287"/>
<dbReference type="eggNOG" id="arCOG04473">
    <property type="taxonomic scope" value="Archaea"/>
</dbReference>
<dbReference type="HOGENOM" id="CLU_112570_3_1_2"/>
<dbReference type="OrthoDB" id="10127at2157"/>
<dbReference type="PhylomeDB" id="A8A968"/>
<dbReference type="Proteomes" id="UP000000262">
    <property type="component" value="Chromosome"/>
</dbReference>
<dbReference type="GO" id="GO:0022625">
    <property type="term" value="C:cytosolic large ribosomal subunit"/>
    <property type="evidence" value="ECO:0007669"/>
    <property type="project" value="TreeGrafter"/>
</dbReference>
<dbReference type="GO" id="GO:0003735">
    <property type="term" value="F:structural constituent of ribosome"/>
    <property type="evidence" value="ECO:0007669"/>
    <property type="project" value="InterPro"/>
</dbReference>
<dbReference type="GO" id="GO:0002181">
    <property type="term" value="P:cytoplasmic translation"/>
    <property type="evidence" value="ECO:0007669"/>
    <property type="project" value="TreeGrafter"/>
</dbReference>
<dbReference type="CDD" id="cd00463">
    <property type="entry name" value="Ribosomal_L31e"/>
    <property type="match status" value="1"/>
</dbReference>
<dbReference type="Gene3D" id="3.10.440.10">
    <property type="match status" value="1"/>
</dbReference>
<dbReference type="HAMAP" id="MF_00410">
    <property type="entry name" value="Ribosomal_eL31"/>
    <property type="match status" value="1"/>
</dbReference>
<dbReference type="InterPro" id="IPR000054">
    <property type="entry name" value="Ribosomal_eL31"/>
</dbReference>
<dbReference type="InterPro" id="IPR023621">
    <property type="entry name" value="Ribosomal_eL31_dom_sf"/>
</dbReference>
<dbReference type="NCBIfam" id="NF002258">
    <property type="entry name" value="PRK01192.1-1"/>
    <property type="match status" value="1"/>
</dbReference>
<dbReference type="PANTHER" id="PTHR10956">
    <property type="entry name" value="60S RIBOSOMAL PROTEIN L31"/>
    <property type="match status" value="1"/>
</dbReference>
<dbReference type="PANTHER" id="PTHR10956:SF0">
    <property type="entry name" value="60S RIBOSOMAL PROTEIN L31"/>
    <property type="match status" value="1"/>
</dbReference>
<dbReference type="Pfam" id="PF01198">
    <property type="entry name" value="Ribosomal_L31e"/>
    <property type="match status" value="1"/>
</dbReference>
<dbReference type="SMART" id="SM01380">
    <property type="entry name" value="Ribosomal_L31e"/>
    <property type="match status" value="1"/>
</dbReference>
<dbReference type="SUPFAM" id="SSF54575">
    <property type="entry name" value="Ribosomal protein L31e"/>
    <property type="match status" value="1"/>
</dbReference>
<protein>
    <recommendedName>
        <fullName evidence="1">Large ribosomal subunit protein eL31</fullName>
    </recommendedName>
    <alternativeName>
        <fullName evidence="2">50S ribosomal protein L31e</fullName>
    </alternativeName>
</protein>
<proteinExistence type="inferred from homology"/>
<organism>
    <name type="scientific">Ignicoccus hospitalis (strain KIN4/I / DSM 18386 / JCM 14125)</name>
    <dbReference type="NCBI Taxonomy" id="453591"/>
    <lineage>
        <taxon>Archaea</taxon>
        <taxon>Thermoproteota</taxon>
        <taxon>Thermoprotei</taxon>
        <taxon>Desulfurococcales</taxon>
        <taxon>Desulfurococcaceae</taxon>
        <taxon>Ignicoccus</taxon>
    </lineage>
</organism>
<evidence type="ECO:0000255" key="1">
    <source>
        <dbReference type="HAMAP-Rule" id="MF_00410"/>
    </source>
</evidence>
<evidence type="ECO:0000305" key="2"/>
<feature type="chain" id="PRO_1000049910" description="Large ribosomal subunit protein eL31">
    <location>
        <begin position="1"/>
        <end position="101"/>
    </location>
</feature>
<keyword id="KW-1185">Reference proteome</keyword>
<keyword id="KW-0687">Ribonucleoprotein</keyword>
<keyword id="KW-0689">Ribosomal protein</keyword>
<name>RL31_IGNH4</name>